<name>RT106_ASPFU</name>
<organism>
    <name type="scientific">Aspergillus fumigatus (strain ATCC MYA-4609 / CBS 101355 / FGSC A1100 / Af293)</name>
    <name type="common">Neosartorya fumigata</name>
    <dbReference type="NCBI Taxonomy" id="330879"/>
    <lineage>
        <taxon>Eukaryota</taxon>
        <taxon>Fungi</taxon>
        <taxon>Dikarya</taxon>
        <taxon>Ascomycota</taxon>
        <taxon>Pezizomycotina</taxon>
        <taxon>Eurotiomycetes</taxon>
        <taxon>Eurotiomycetidae</taxon>
        <taxon>Eurotiales</taxon>
        <taxon>Aspergillaceae</taxon>
        <taxon>Aspergillus</taxon>
        <taxon>Aspergillus subgen. Fumigati</taxon>
    </lineage>
</organism>
<accession>Q4WNC1</accession>
<feature type="chain" id="PRO_0000320483" description="Histone chaperone rtt106">
    <location>
        <begin position="1"/>
        <end position="459"/>
    </location>
</feature>
<feature type="region of interest" description="Disordered" evidence="2">
    <location>
        <begin position="67"/>
        <end position="99"/>
    </location>
</feature>
<feature type="region of interest" description="Disordered" evidence="2">
    <location>
        <begin position="373"/>
        <end position="459"/>
    </location>
</feature>
<feature type="compositionally biased region" description="Polar residues" evidence="2">
    <location>
        <begin position="85"/>
        <end position="97"/>
    </location>
</feature>
<feature type="compositionally biased region" description="Acidic residues" evidence="2">
    <location>
        <begin position="398"/>
        <end position="408"/>
    </location>
</feature>
<feature type="compositionally biased region" description="Acidic residues" evidence="2">
    <location>
        <begin position="424"/>
        <end position="440"/>
    </location>
</feature>
<feature type="compositionally biased region" description="Acidic residues" evidence="2">
    <location>
        <begin position="449"/>
        <end position="459"/>
    </location>
</feature>
<keyword id="KW-0143">Chaperone</keyword>
<keyword id="KW-0158">Chromosome</keyword>
<keyword id="KW-0238">DNA-binding</keyword>
<keyword id="KW-0539">Nucleus</keyword>
<keyword id="KW-1185">Reference proteome</keyword>
<keyword id="KW-0804">Transcription</keyword>
<keyword id="KW-0805">Transcription regulation</keyword>
<dbReference type="EMBL" id="AAHF01000006">
    <property type="protein sequence ID" value="EAL88543.1"/>
    <property type="molecule type" value="Genomic_DNA"/>
</dbReference>
<dbReference type="RefSeq" id="XP_750581.1">
    <property type="nucleotide sequence ID" value="XM_745488.1"/>
</dbReference>
<dbReference type="SMR" id="Q4WNC1"/>
<dbReference type="FunCoup" id="Q4WNC1">
    <property type="interactions" value="114"/>
</dbReference>
<dbReference type="STRING" id="330879.Q4WNC1"/>
<dbReference type="EnsemblFungi" id="EAL88543">
    <property type="protein sequence ID" value="EAL88543"/>
    <property type="gene ID" value="AFUA_6G06880"/>
</dbReference>
<dbReference type="GeneID" id="3508840"/>
<dbReference type="KEGG" id="afm:AFUA_6G06880"/>
<dbReference type="VEuPathDB" id="FungiDB:Afu6g06880"/>
<dbReference type="eggNOG" id="ENOG502R9PE">
    <property type="taxonomic scope" value="Eukaryota"/>
</dbReference>
<dbReference type="HOGENOM" id="CLU_033828_0_0_1"/>
<dbReference type="InParanoid" id="Q4WNC1"/>
<dbReference type="OMA" id="AMPEAHR"/>
<dbReference type="OrthoDB" id="75754at2759"/>
<dbReference type="Proteomes" id="UP000002530">
    <property type="component" value="Chromosome 6"/>
</dbReference>
<dbReference type="GO" id="GO:0005694">
    <property type="term" value="C:chromosome"/>
    <property type="evidence" value="ECO:0007669"/>
    <property type="project" value="UniProtKB-SubCell"/>
</dbReference>
<dbReference type="GO" id="GO:0005634">
    <property type="term" value="C:nucleus"/>
    <property type="evidence" value="ECO:0007669"/>
    <property type="project" value="UniProtKB-SubCell"/>
</dbReference>
<dbReference type="GO" id="GO:0003677">
    <property type="term" value="F:DNA binding"/>
    <property type="evidence" value="ECO:0007669"/>
    <property type="project" value="UniProtKB-KW"/>
</dbReference>
<dbReference type="GO" id="GO:0042393">
    <property type="term" value="F:histone binding"/>
    <property type="evidence" value="ECO:0000318"/>
    <property type="project" value="GO_Central"/>
</dbReference>
<dbReference type="GO" id="GO:0031491">
    <property type="term" value="F:nucleosome binding"/>
    <property type="evidence" value="ECO:0000318"/>
    <property type="project" value="GO_Central"/>
</dbReference>
<dbReference type="Gene3D" id="2.30.29.120">
    <property type="match status" value="1"/>
</dbReference>
<dbReference type="Gene3D" id="2.30.29.30">
    <property type="entry name" value="Pleckstrin-homology domain (PH domain)/Phosphotyrosine-binding domain (PTB)"/>
    <property type="match status" value="1"/>
</dbReference>
<dbReference type="InterPro" id="IPR011993">
    <property type="entry name" value="PH-like_dom_sf"/>
</dbReference>
<dbReference type="InterPro" id="IPR013719">
    <property type="entry name" value="RTT106/SPT16-like_middle_dom"/>
</dbReference>
<dbReference type="InterPro" id="IPR050454">
    <property type="entry name" value="RTT106/SSRP1_HistChap/FACT"/>
</dbReference>
<dbReference type="PANTHER" id="PTHR45849">
    <property type="entry name" value="FACT COMPLEX SUBUNIT SSRP1"/>
    <property type="match status" value="1"/>
</dbReference>
<dbReference type="PANTHER" id="PTHR45849:SF3">
    <property type="entry name" value="HISTONE CHAPERONE RTT106"/>
    <property type="match status" value="1"/>
</dbReference>
<dbReference type="Pfam" id="PF08512">
    <property type="entry name" value="Rttp106-like_middle"/>
    <property type="match status" value="1"/>
</dbReference>
<dbReference type="SMART" id="SM01287">
    <property type="entry name" value="Rtt106"/>
    <property type="match status" value="1"/>
</dbReference>
<dbReference type="SUPFAM" id="SSF50729">
    <property type="entry name" value="PH domain-like"/>
    <property type="match status" value="1"/>
</dbReference>
<proteinExistence type="inferred from homology"/>
<gene>
    <name type="primary">rtt106</name>
    <name type="ORF">AFUA_6G06880</name>
</gene>
<evidence type="ECO:0000250" key="1"/>
<evidence type="ECO:0000256" key="2">
    <source>
        <dbReference type="SAM" id="MobiDB-lite"/>
    </source>
</evidence>
<evidence type="ECO:0000305" key="3"/>
<comment type="function">
    <text evidence="1">Histones H3 and H4 chaperone involved in the nucleosome formation and heterochromatin silencing. Required for the deposition of H3K56ac-carrying H3-H4 complex onto newly-replicated DNA. Plays a role in the transcriptional regulation of the cell-cycle dependent histone genes by creating a repressive structure at the core histone gene promoter (By similarity).</text>
</comment>
<comment type="subunit">
    <text evidence="1">Interacts with histones H3 and H4.</text>
</comment>
<comment type="subcellular location">
    <subcellularLocation>
        <location evidence="1">Nucleus</location>
    </subcellularLocation>
    <subcellularLocation>
        <location evidence="1">Chromosome</location>
    </subcellularLocation>
</comment>
<comment type="similarity">
    <text evidence="3">Belongs to the RTT106 family.</text>
</comment>
<reference key="1">
    <citation type="journal article" date="2005" name="Nature">
        <title>Genomic sequence of the pathogenic and allergenic filamentous fungus Aspergillus fumigatus.</title>
        <authorList>
            <person name="Nierman W.C."/>
            <person name="Pain A."/>
            <person name="Anderson M.J."/>
            <person name="Wortman J.R."/>
            <person name="Kim H.S."/>
            <person name="Arroyo J."/>
            <person name="Berriman M."/>
            <person name="Abe K."/>
            <person name="Archer D.B."/>
            <person name="Bermejo C."/>
            <person name="Bennett J.W."/>
            <person name="Bowyer P."/>
            <person name="Chen D."/>
            <person name="Collins M."/>
            <person name="Coulsen R."/>
            <person name="Davies R."/>
            <person name="Dyer P.S."/>
            <person name="Farman M.L."/>
            <person name="Fedorova N."/>
            <person name="Fedorova N.D."/>
            <person name="Feldblyum T.V."/>
            <person name="Fischer R."/>
            <person name="Fosker N."/>
            <person name="Fraser A."/>
            <person name="Garcia J.L."/>
            <person name="Garcia M.J."/>
            <person name="Goble A."/>
            <person name="Goldman G.H."/>
            <person name="Gomi K."/>
            <person name="Griffith-Jones S."/>
            <person name="Gwilliam R."/>
            <person name="Haas B.J."/>
            <person name="Haas H."/>
            <person name="Harris D.E."/>
            <person name="Horiuchi H."/>
            <person name="Huang J."/>
            <person name="Humphray S."/>
            <person name="Jimenez J."/>
            <person name="Keller N."/>
            <person name="Khouri H."/>
            <person name="Kitamoto K."/>
            <person name="Kobayashi T."/>
            <person name="Konzack S."/>
            <person name="Kulkarni R."/>
            <person name="Kumagai T."/>
            <person name="Lafton A."/>
            <person name="Latge J.-P."/>
            <person name="Li W."/>
            <person name="Lord A."/>
            <person name="Lu C."/>
            <person name="Majoros W.H."/>
            <person name="May G.S."/>
            <person name="Miller B.L."/>
            <person name="Mohamoud Y."/>
            <person name="Molina M."/>
            <person name="Monod M."/>
            <person name="Mouyna I."/>
            <person name="Mulligan S."/>
            <person name="Murphy L.D."/>
            <person name="O'Neil S."/>
            <person name="Paulsen I."/>
            <person name="Penalva M.A."/>
            <person name="Pertea M."/>
            <person name="Price C."/>
            <person name="Pritchard B.L."/>
            <person name="Quail M.A."/>
            <person name="Rabbinowitsch E."/>
            <person name="Rawlins N."/>
            <person name="Rajandream M.A."/>
            <person name="Reichard U."/>
            <person name="Renauld H."/>
            <person name="Robson G.D."/>
            <person name="Rodriguez de Cordoba S."/>
            <person name="Rodriguez-Pena J.M."/>
            <person name="Ronning C.M."/>
            <person name="Rutter S."/>
            <person name="Salzberg S.L."/>
            <person name="Sanchez M."/>
            <person name="Sanchez-Ferrero J.C."/>
            <person name="Saunders D."/>
            <person name="Seeger K."/>
            <person name="Squares R."/>
            <person name="Squares S."/>
            <person name="Takeuchi M."/>
            <person name="Tekaia F."/>
            <person name="Turner G."/>
            <person name="Vazquez de Aldana C.R."/>
            <person name="Weidman J."/>
            <person name="White O."/>
            <person name="Woodward J.R."/>
            <person name="Yu J.-H."/>
            <person name="Fraser C.M."/>
            <person name="Galagan J.E."/>
            <person name="Asai K."/>
            <person name="Machida M."/>
            <person name="Hall N."/>
            <person name="Barrell B.G."/>
            <person name="Denning D.W."/>
        </authorList>
    </citation>
    <scope>NUCLEOTIDE SEQUENCE [LARGE SCALE GENOMIC DNA]</scope>
    <source>
        <strain>ATCC MYA-4609 / CBS 101355 / FGSC A1100 / Af293</strain>
    </source>
</reference>
<protein>
    <recommendedName>
        <fullName>Histone chaperone rtt106</fullName>
    </recommendedName>
</protein>
<sequence>MSFATINRSATKTLSTSIPAIEDAFAAEPSLKKRVYDAIENTPQHVPLFEDIAKYTSSLLARHAIPPTQPVEADEAPAAKKRKLQNGNAAGDTQSPGNVEAEAPLQFSMQDVSFAIPQRKKLTLEVTAGRGSLRARNQTSKEVEFGVPMDRIRHVLCLPVPEKSQRQFNFCIIPQYSDGINPPPEGEQAFESMVWTVSDGPAKAAFSGNGQQVGAGDGETAEALVRRVLNENLSHTKVVRPDERQFVSAMPEAHRKSEKAYHVKAFRGSKEGYLFFLSTGIFFGFKKPLIFFAFENIESVSYTSVLQRTFNLNIAVRPHNGGENATQEVELSMIDQADYAGIDAYIKKNGLQDASLAEARRAKRYNINGAKAEENAAGTANDNAVEESELQKAQRELEDQEDEEEEDYNPGSDGESDGSGSSSEEGDDGNEEGDEDDEGQDLVAAELGSEAEDIAEDEL</sequence>